<gene>
    <name evidence="1" type="primary">hemE</name>
    <name type="ordered locus">ECIAI1_4212</name>
</gene>
<feature type="chain" id="PRO_1000197523" description="Uroporphyrinogen decarboxylase">
    <location>
        <begin position="1"/>
        <end position="354"/>
    </location>
</feature>
<feature type="binding site" evidence="1">
    <location>
        <begin position="27"/>
        <end position="31"/>
    </location>
    <ligand>
        <name>substrate</name>
    </ligand>
</feature>
<feature type="binding site" evidence="1">
    <location>
        <position position="77"/>
    </location>
    <ligand>
        <name>substrate</name>
    </ligand>
</feature>
<feature type="binding site" evidence="1">
    <location>
        <position position="154"/>
    </location>
    <ligand>
        <name>substrate</name>
    </ligand>
</feature>
<feature type="binding site" evidence="1">
    <location>
        <position position="209"/>
    </location>
    <ligand>
        <name>substrate</name>
    </ligand>
</feature>
<feature type="binding site" evidence="1">
    <location>
        <position position="327"/>
    </location>
    <ligand>
        <name>substrate</name>
    </ligand>
</feature>
<feature type="site" description="Transition state stabilizer" evidence="1">
    <location>
        <position position="77"/>
    </location>
</feature>
<dbReference type="EC" id="4.1.1.37" evidence="1"/>
<dbReference type="EMBL" id="CU928160">
    <property type="protein sequence ID" value="CAR00971.1"/>
    <property type="molecule type" value="Genomic_DNA"/>
</dbReference>
<dbReference type="RefSeq" id="WP_000137657.1">
    <property type="nucleotide sequence ID" value="NC_011741.1"/>
</dbReference>
<dbReference type="SMR" id="B7M7Q6"/>
<dbReference type="GeneID" id="93777897"/>
<dbReference type="KEGG" id="ecr:ECIAI1_4212"/>
<dbReference type="HOGENOM" id="CLU_040933_0_0_6"/>
<dbReference type="UniPathway" id="UPA00251">
    <property type="reaction ID" value="UER00321"/>
</dbReference>
<dbReference type="GO" id="GO:0005829">
    <property type="term" value="C:cytosol"/>
    <property type="evidence" value="ECO:0007669"/>
    <property type="project" value="TreeGrafter"/>
</dbReference>
<dbReference type="GO" id="GO:0004853">
    <property type="term" value="F:uroporphyrinogen decarboxylase activity"/>
    <property type="evidence" value="ECO:0007669"/>
    <property type="project" value="UniProtKB-UniRule"/>
</dbReference>
<dbReference type="GO" id="GO:0019353">
    <property type="term" value="P:protoporphyrinogen IX biosynthetic process from glutamate"/>
    <property type="evidence" value="ECO:0007669"/>
    <property type="project" value="TreeGrafter"/>
</dbReference>
<dbReference type="CDD" id="cd00717">
    <property type="entry name" value="URO-D"/>
    <property type="match status" value="1"/>
</dbReference>
<dbReference type="FunFam" id="3.20.20.210:FF:000001">
    <property type="entry name" value="Uroporphyrinogen decarboxylase"/>
    <property type="match status" value="1"/>
</dbReference>
<dbReference type="Gene3D" id="3.20.20.210">
    <property type="match status" value="1"/>
</dbReference>
<dbReference type="HAMAP" id="MF_00218">
    <property type="entry name" value="URO_D"/>
    <property type="match status" value="1"/>
</dbReference>
<dbReference type="InterPro" id="IPR038071">
    <property type="entry name" value="UROD/MetE-like_sf"/>
</dbReference>
<dbReference type="InterPro" id="IPR006361">
    <property type="entry name" value="Uroporphyrinogen_deCO2ase_HemE"/>
</dbReference>
<dbReference type="InterPro" id="IPR000257">
    <property type="entry name" value="Uroporphyrinogen_deCOase"/>
</dbReference>
<dbReference type="NCBIfam" id="TIGR01464">
    <property type="entry name" value="hemE"/>
    <property type="match status" value="1"/>
</dbReference>
<dbReference type="PANTHER" id="PTHR21091">
    <property type="entry name" value="METHYLTETRAHYDROFOLATE:HOMOCYSTEINE METHYLTRANSFERASE RELATED"/>
    <property type="match status" value="1"/>
</dbReference>
<dbReference type="PANTHER" id="PTHR21091:SF169">
    <property type="entry name" value="UROPORPHYRINOGEN DECARBOXYLASE"/>
    <property type="match status" value="1"/>
</dbReference>
<dbReference type="Pfam" id="PF01208">
    <property type="entry name" value="URO-D"/>
    <property type="match status" value="1"/>
</dbReference>
<dbReference type="SUPFAM" id="SSF51726">
    <property type="entry name" value="UROD/MetE-like"/>
    <property type="match status" value="1"/>
</dbReference>
<dbReference type="PROSITE" id="PS00906">
    <property type="entry name" value="UROD_1"/>
    <property type="match status" value="1"/>
</dbReference>
<dbReference type="PROSITE" id="PS00907">
    <property type="entry name" value="UROD_2"/>
    <property type="match status" value="1"/>
</dbReference>
<protein>
    <recommendedName>
        <fullName evidence="1">Uroporphyrinogen decarboxylase</fullName>
        <shortName evidence="1">UPD</shortName>
        <shortName evidence="1">URO-D</shortName>
        <ecNumber evidence="1">4.1.1.37</ecNumber>
    </recommendedName>
</protein>
<comment type="function">
    <text evidence="1">Catalyzes the decarboxylation of four acetate groups of uroporphyrinogen-III to yield coproporphyrinogen-III.</text>
</comment>
<comment type="catalytic activity">
    <reaction evidence="1">
        <text>uroporphyrinogen III + 4 H(+) = coproporphyrinogen III + 4 CO2</text>
        <dbReference type="Rhea" id="RHEA:19865"/>
        <dbReference type="ChEBI" id="CHEBI:15378"/>
        <dbReference type="ChEBI" id="CHEBI:16526"/>
        <dbReference type="ChEBI" id="CHEBI:57308"/>
        <dbReference type="ChEBI" id="CHEBI:57309"/>
        <dbReference type="EC" id="4.1.1.37"/>
    </reaction>
</comment>
<comment type="pathway">
    <text evidence="1">Porphyrin-containing compound metabolism; protoporphyrin-IX biosynthesis; coproporphyrinogen-III from 5-aminolevulinate: step 4/4.</text>
</comment>
<comment type="subunit">
    <text evidence="1">Homodimer.</text>
</comment>
<comment type="subcellular location">
    <subcellularLocation>
        <location evidence="1">Cytoplasm</location>
    </subcellularLocation>
</comment>
<comment type="similarity">
    <text evidence="1">Belongs to the uroporphyrinogen decarboxylase family.</text>
</comment>
<name>DCUP_ECO8A</name>
<keyword id="KW-0963">Cytoplasm</keyword>
<keyword id="KW-0210">Decarboxylase</keyword>
<keyword id="KW-0456">Lyase</keyword>
<keyword id="KW-0627">Porphyrin biosynthesis</keyword>
<reference key="1">
    <citation type="journal article" date="2009" name="PLoS Genet.">
        <title>Organised genome dynamics in the Escherichia coli species results in highly diverse adaptive paths.</title>
        <authorList>
            <person name="Touchon M."/>
            <person name="Hoede C."/>
            <person name="Tenaillon O."/>
            <person name="Barbe V."/>
            <person name="Baeriswyl S."/>
            <person name="Bidet P."/>
            <person name="Bingen E."/>
            <person name="Bonacorsi S."/>
            <person name="Bouchier C."/>
            <person name="Bouvet O."/>
            <person name="Calteau A."/>
            <person name="Chiapello H."/>
            <person name="Clermont O."/>
            <person name="Cruveiller S."/>
            <person name="Danchin A."/>
            <person name="Diard M."/>
            <person name="Dossat C."/>
            <person name="Karoui M.E."/>
            <person name="Frapy E."/>
            <person name="Garry L."/>
            <person name="Ghigo J.M."/>
            <person name="Gilles A.M."/>
            <person name="Johnson J."/>
            <person name="Le Bouguenec C."/>
            <person name="Lescat M."/>
            <person name="Mangenot S."/>
            <person name="Martinez-Jehanne V."/>
            <person name="Matic I."/>
            <person name="Nassif X."/>
            <person name="Oztas S."/>
            <person name="Petit M.A."/>
            <person name="Pichon C."/>
            <person name="Rouy Z."/>
            <person name="Ruf C.S."/>
            <person name="Schneider D."/>
            <person name="Tourret J."/>
            <person name="Vacherie B."/>
            <person name="Vallenet D."/>
            <person name="Medigue C."/>
            <person name="Rocha E.P.C."/>
            <person name="Denamur E."/>
        </authorList>
    </citation>
    <scope>NUCLEOTIDE SEQUENCE [LARGE SCALE GENOMIC DNA]</scope>
    <source>
        <strain>IAI1</strain>
    </source>
</reference>
<evidence type="ECO:0000255" key="1">
    <source>
        <dbReference type="HAMAP-Rule" id="MF_00218"/>
    </source>
</evidence>
<organism>
    <name type="scientific">Escherichia coli O8 (strain IAI1)</name>
    <dbReference type="NCBI Taxonomy" id="585034"/>
    <lineage>
        <taxon>Bacteria</taxon>
        <taxon>Pseudomonadati</taxon>
        <taxon>Pseudomonadota</taxon>
        <taxon>Gammaproteobacteria</taxon>
        <taxon>Enterobacterales</taxon>
        <taxon>Enterobacteriaceae</taxon>
        <taxon>Escherichia</taxon>
    </lineage>
</organism>
<proteinExistence type="inferred from homology"/>
<sequence>MTELKNDRYLRALLRQPVDVTPVWMMRQAGRYLPEYKATRAQAGDFMSLCKNAELACEVTLQPLRRYPLDAAILFSDILTVPDAMGLGLYFEAGEGPRFTSPVTCKADVDKLPIPDPEDELGYVMNAVRTIRRELKGEVPLIGFSGSPWTLATYMVEGGSSKAFTVIKKMMYADPQALHALLDKLAKSVTLYLNAQIKAGAQAVMIFDTWGGVLTGRDYQQFSLYYMHKIVDGLLRENDGRRVPVTLFTKGGGQWLEAMAETGCDALGLDWTTDIADARRRVGNKVALQGNMDPSMLYAPPARIEEEVATILAGFGHGEGHVFNLGHGIHQDVPPEHAGVFVEAVHRLSEQYHR</sequence>
<accession>B7M7Q6</accession>